<name>RL3_DEBHA</name>
<accession>Q6BXM5</accession>
<reference key="1">
    <citation type="journal article" date="2004" name="Nature">
        <title>Genome evolution in yeasts.</title>
        <authorList>
            <person name="Dujon B."/>
            <person name="Sherman D."/>
            <person name="Fischer G."/>
            <person name="Durrens P."/>
            <person name="Casaregola S."/>
            <person name="Lafontaine I."/>
            <person name="de Montigny J."/>
            <person name="Marck C."/>
            <person name="Neuveglise C."/>
            <person name="Talla E."/>
            <person name="Goffard N."/>
            <person name="Frangeul L."/>
            <person name="Aigle M."/>
            <person name="Anthouard V."/>
            <person name="Babour A."/>
            <person name="Barbe V."/>
            <person name="Barnay S."/>
            <person name="Blanchin S."/>
            <person name="Beckerich J.-M."/>
            <person name="Beyne E."/>
            <person name="Bleykasten C."/>
            <person name="Boisrame A."/>
            <person name="Boyer J."/>
            <person name="Cattolico L."/>
            <person name="Confanioleri F."/>
            <person name="de Daruvar A."/>
            <person name="Despons L."/>
            <person name="Fabre E."/>
            <person name="Fairhead C."/>
            <person name="Ferry-Dumazet H."/>
            <person name="Groppi A."/>
            <person name="Hantraye F."/>
            <person name="Hennequin C."/>
            <person name="Jauniaux N."/>
            <person name="Joyet P."/>
            <person name="Kachouri R."/>
            <person name="Kerrest A."/>
            <person name="Koszul R."/>
            <person name="Lemaire M."/>
            <person name="Lesur I."/>
            <person name="Ma L."/>
            <person name="Muller H."/>
            <person name="Nicaud J.-M."/>
            <person name="Nikolski M."/>
            <person name="Oztas S."/>
            <person name="Ozier-Kalogeropoulos O."/>
            <person name="Pellenz S."/>
            <person name="Potier S."/>
            <person name="Richard G.-F."/>
            <person name="Straub M.-L."/>
            <person name="Suleau A."/>
            <person name="Swennen D."/>
            <person name="Tekaia F."/>
            <person name="Wesolowski-Louvel M."/>
            <person name="Westhof E."/>
            <person name="Wirth B."/>
            <person name="Zeniou-Meyer M."/>
            <person name="Zivanovic Y."/>
            <person name="Bolotin-Fukuhara M."/>
            <person name="Thierry A."/>
            <person name="Bouchier C."/>
            <person name="Caudron B."/>
            <person name="Scarpelli C."/>
            <person name="Gaillardin C."/>
            <person name="Weissenbach J."/>
            <person name="Wincker P."/>
            <person name="Souciet J.-L."/>
        </authorList>
    </citation>
    <scope>NUCLEOTIDE SEQUENCE [LARGE SCALE GENOMIC DNA]</scope>
    <source>
        <strain>ATCC 36239 / CBS 767 / BCRC 21394 / JCM 1990 / NBRC 0083 / IGC 2968</strain>
    </source>
</reference>
<dbReference type="EMBL" id="CR382134">
    <property type="protein sequence ID" value="CAG85030.1"/>
    <property type="molecule type" value="Genomic_DNA"/>
</dbReference>
<dbReference type="RefSeq" id="XP_457044.1">
    <property type="nucleotide sequence ID" value="XM_457044.1"/>
</dbReference>
<dbReference type="SMR" id="Q6BXM5"/>
<dbReference type="FunCoup" id="Q6BXM5">
    <property type="interactions" value="878"/>
</dbReference>
<dbReference type="STRING" id="284592.Q6BXM5"/>
<dbReference type="GeneID" id="2913160"/>
<dbReference type="KEGG" id="dha:DEHA2B01804g"/>
<dbReference type="VEuPathDB" id="FungiDB:DEHA2B01804g"/>
<dbReference type="eggNOG" id="KOG0746">
    <property type="taxonomic scope" value="Eukaryota"/>
</dbReference>
<dbReference type="HOGENOM" id="CLU_033361_2_1_1"/>
<dbReference type="InParanoid" id="Q6BXM5"/>
<dbReference type="OMA" id="QRTEYNK"/>
<dbReference type="OrthoDB" id="1611972at2759"/>
<dbReference type="Proteomes" id="UP000000599">
    <property type="component" value="Chromosome B"/>
</dbReference>
<dbReference type="GO" id="GO:0022625">
    <property type="term" value="C:cytosolic large ribosomal subunit"/>
    <property type="evidence" value="ECO:0007669"/>
    <property type="project" value="EnsemblFungi"/>
</dbReference>
<dbReference type="GO" id="GO:0003723">
    <property type="term" value="F:RNA binding"/>
    <property type="evidence" value="ECO:0007669"/>
    <property type="project" value="TreeGrafter"/>
</dbReference>
<dbReference type="GO" id="GO:0003735">
    <property type="term" value="F:structural constituent of ribosome"/>
    <property type="evidence" value="ECO:0007669"/>
    <property type="project" value="InterPro"/>
</dbReference>
<dbReference type="GO" id="GO:1990145">
    <property type="term" value="P:maintenance of translational fidelity"/>
    <property type="evidence" value="ECO:0007669"/>
    <property type="project" value="EnsemblFungi"/>
</dbReference>
<dbReference type="GO" id="GO:0000027">
    <property type="term" value="P:ribosomal large subunit assembly"/>
    <property type="evidence" value="ECO:0007669"/>
    <property type="project" value="EnsemblFungi"/>
</dbReference>
<dbReference type="GO" id="GO:0006364">
    <property type="term" value="P:rRNA processing"/>
    <property type="evidence" value="ECO:0007669"/>
    <property type="project" value="EnsemblFungi"/>
</dbReference>
<dbReference type="GO" id="GO:0006414">
    <property type="term" value="P:translational elongation"/>
    <property type="evidence" value="ECO:0007669"/>
    <property type="project" value="EnsemblFungi"/>
</dbReference>
<dbReference type="FunFam" id="2.40.30.10:FF:000079">
    <property type="entry name" value="60S ribosomal protein L3"/>
    <property type="match status" value="1"/>
</dbReference>
<dbReference type="FunFam" id="3.30.1430.10:FF:000001">
    <property type="entry name" value="60S ribosomal protein L3"/>
    <property type="match status" value="1"/>
</dbReference>
<dbReference type="FunFam" id="4.10.960.10:FF:000002">
    <property type="entry name" value="60S ribosomal protein L3"/>
    <property type="match status" value="1"/>
</dbReference>
<dbReference type="FunFam" id="2.40.30.10:FF:000351">
    <property type="entry name" value="Ribosomal protein L3"/>
    <property type="match status" value="1"/>
</dbReference>
<dbReference type="Gene3D" id="3.30.1430.10">
    <property type="match status" value="1"/>
</dbReference>
<dbReference type="Gene3D" id="4.10.960.10">
    <property type="entry name" value="Ribosomal protein L3, domain 3"/>
    <property type="match status" value="1"/>
</dbReference>
<dbReference type="Gene3D" id="2.40.30.10">
    <property type="entry name" value="Translation factors"/>
    <property type="match status" value="1"/>
</dbReference>
<dbReference type="InterPro" id="IPR045077">
    <property type="entry name" value="L3_arc_euk"/>
</dbReference>
<dbReference type="InterPro" id="IPR044892">
    <property type="entry name" value="Ribosomal_L3_dom_3_arc_sf"/>
</dbReference>
<dbReference type="InterPro" id="IPR000597">
    <property type="entry name" value="Ribosomal_uL3"/>
</dbReference>
<dbReference type="InterPro" id="IPR019926">
    <property type="entry name" value="Ribosomal_uL3_CS"/>
</dbReference>
<dbReference type="InterPro" id="IPR009000">
    <property type="entry name" value="Transl_B-barrel_sf"/>
</dbReference>
<dbReference type="PANTHER" id="PTHR11363">
    <property type="entry name" value="60S RIBOSOMAL PROTEIN L3-RELATED"/>
    <property type="match status" value="1"/>
</dbReference>
<dbReference type="PANTHER" id="PTHR11363:SF5">
    <property type="entry name" value="LARGE RIBOSOMAL SUBUNIT PROTEIN UL3"/>
    <property type="match status" value="1"/>
</dbReference>
<dbReference type="Pfam" id="PF00297">
    <property type="entry name" value="Ribosomal_L3"/>
    <property type="match status" value="1"/>
</dbReference>
<dbReference type="SUPFAM" id="SSF50447">
    <property type="entry name" value="Translation proteins"/>
    <property type="match status" value="1"/>
</dbReference>
<dbReference type="PROSITE" id="PS00474">
    <property type="entry name" value="RIBOSOMAL_L3"/>
    <property type="match status" value="1"/>
</dbReference>
<comment type="subcellular location">
    <subcellularLocation>
        <location evidence="1">Cytoplasm</location>
    </subcellularLocation>
</comment>
<comment type="similarity">
    <text evidence="2">Belongs to the universal ribosomal protein uL3 family.</text>
</comment>
<proteinExistence type="inferred from homology"/>
<evidence type="ECO:0000250" key="1"/>
<evidence type="ECO:0000305" key="2"/>
<organism>
    <name type="scientific">Debaryomyces hansenii (strain ATCC 36239 / CBS 767 / BCRC 21394 / JCM 1990 / NBRC 0083 / IGC 2968)</name>
    <name type="common">Yeast</name>
    <name type="synonym">Torulaspora hansenii</name>
    <dbReference type="NCBI Taxonomy" id="284592"/>
    <lineage>
        <taxon>Eukaryota</taxon>
        <taxon>Fungi</taxon>
        <taxon>Dikarya</taxon>
        <taxon>Ascomycota</taxon>
        <taxon>Saccharomycotina</taxon>
        <taxon>Pichiomycetes</taxon>
        <taxon>Debaryomycetaceae</taxon>
        <taxon>Debaryomyces</taxon>
    </lineage>
</organism>
<feature type="chain" id="PRO_0000077246" description="Large ribosomal subunit protein uL3">
    <location>
        <begin position="1"/>
        <end position="389"/>
    </location>
</feature>
<sequence>MSHRKYEAPRHGSLGFLPRKRSANIRGRVKSFPKDVKSKPVALTAFLGYKAGMTTVVRDLDRPGSKMHKREIVEAATVVDTPPLVVVGVVGYVETPRGLRSLTTVWAEHLSEEVRRRFYKNWYKSKKKAFTKYSAKYAQDGAQVERELARIKKYASVVRVLAHTQIKKTPLAQKKAHLAEIQVNGGSVSDKVDWAKEHFEKTVSVDSVFEKDEMVDVAAVTKGHGFEGVTHRWGTKKLPRKTHRGLRKVACIGAWHPANVQWTVARAGQNGFHHRTSINHKVYRVGSAGDESSGATEFDRTKKTINPMGGFVRYGNVKNDFMLLKGSIPGVKKRIVTIRKSLYVDTSRRATENVNLKWIDTASKFGKGRFQTPAEKHAFLGTLKKDLEK</sequence>
<gene>
    <name type="primary">RPL3</name>
    <name type="ordered locus">DEHA2B01804g</name>
</gene>
<keyword id="KW-0963">Cytoplasm</keyword>
<keyword id="KW-1185">Reference proteome</keyword>
<keyword id="KW-0687">Ribonucleoprotein</keyword>
<keyword id="KW-0689">Ribosomal protein</keyword>
<protein>
    <recommendedName>
        <fullName evidence="2">Large ribosomal subunit protein uL3</fullName>
    </recommendedName>
    <alternativeName>
        <fullName>60S ribosomal protein L3</fullName>
    </alternativeName>
</protein>